<feature type="chain" id="PRO_1000138799" description="Orotate phosphoribosyltransferase">
    <location>
        <begin position="1"/>
        <end position="213"/>
    </location>
</feature>
<feature type="binding site" description="in other chain" evidence="1">
    <location>
        <position position="26"/>
    </location>
    <ligand>
        <name>5-phospho-alpha-D-ribose 1-diphosphate</name>
        <dbReference type="ChEBI" id="CHEBI:58017"/>
        <note>ligand shared between dimeric partners</note>
    </ligand>
</feature>
<feature type="binding site" evidence="1">
    <location>
        <begin position="34"/>
        <end position="35"/>
    </location>
    <ligand>
        <name>orotate</name>
        <dbReference type="ChEBI" id="CHEBI:30839"/>
    </ligand>
</feature>
<feature type="binding site" description="in other chain" evidence="1">
    <location>
        <begin position="72"/>
        <end position="73"/>
    </location>
    <ligand>
        <name>5-phospho-alpha-D-ribose 1-diphosphate</name>
        <dbReference type="ChEBI" id="CHEBI:58017"/>
        <note>ligand shared between dimeric partners</note>
    </ligand>
</feature>
<feature type="binding site" evidence="1">
    <location>
        <position position="99"/>
    </location>
    <ligand>
        <name>5-phospho-alpha-D-ribose 1-diphosphate</name>
        <dbReference type="ChEBI" id="CHEBI:58017"/>
        <note>ligand shared between dimeric partners</note>
    </ligand>
</feature>
<feature type="binding site" description="in other chain" evidence="1">
    <location>
        <position position="100"/>
    </location>
    <ligand>
        <name>5-phospho-alpha-D-ribose 1-diphosphate</name>
        <dbReference type="ChEBI" id="CHEBI:58017"/>
        <note>ligand shared between dimeric partners</note>
    </ligand>
</feature>
<feature type="binding site" evidence="1">
    <location>
        <position position="103"/>
    </location>
    <ligand>
        <name>5-phospho-alpha-D-ribose 1-diphosphate</name>
        <dbReference type="ChEBI" id="CHEBI:58017"/>
        <note>ligand shared between dimeric partners</note>
    </ligand>
</feature>
<feature type="binding site" evidence="1">
    <location>
        <position position="105"/>
    </location>
    <ligand>
        <name>5-phospho-alpha-D-ribose 1-diphosphate</name>
        <dbReference type="ChEBI" id="CHEBI:58017"/>
        <note>ligand shared between dimeric partners</note>
    </ligand>
</feature>
<feature type="binding site" description="in other chain" evidence="1">
    <location>
        <begin position="124"/>
        <end position="132"/>
    </location>
    <ligand>
        <name>5-phospho-alpha-D-ribose 1-diphosphate</name>
        <dbReference type="ChEBI" id="CHEBI:58017"/>
        <note>ligand shared between dimeric partners</note>
    </ligand>
</feature>
<feature type="binding site" evidence="1">
    <location>
        <position position="128"/>
    </location>
    <ligand>
        <name>orotate</name>
        <dbReference type="ChEBI" id="CHEBI:30839"/>
    </ligand>
</feature>
<feature type="binding site" evidence="1">
    <location>
        <position position="156"/>
    </location>
    <ligand>
        <name>orotate</name>
        <dbReference type="ChEBI" id="CHEBI:30839"/>
    </ligand>
</feature>
<keyword id="KW-0328">Glycosyltransferase</keyword>
<keyword id="KW-0460">Magnesium</keyword>
<keyword id="KW-0665">Pyrimidine biosynthesis</keyword>
<keyword id="KW-0808">Transferase</keyword>
<evidence type="ECO:0000255" key="1">
    <source>
        <dbReference type="HAMAP-Rule" id="MF_01208"/>
    </source>
</evidence>
<name>PYRE_KLEP3</name>
<proteinExistence type="inferred from homology"/>
<dbReference type="EC" id="2.4.2.10" evidence="1"/>
<dbReference type="EMBL" id="CP000964">
    <property type="protein sequence ID" value="ACI10215.1"/>
    <property type="molecule type" value="Genomic_DNA"/>
</dbReference>
<dbReference type="SMR" id="B5XTG0"/>
<dbReference type="KEGG" id="kpe:KPK_0111"/>
<dbReference type="HOGENOM" id="CLU_074878_0_1_6"/>
<dbReference type="UniPathway" id="UPA00070">
    <property type="reaction ID" value="UER00119"/>
</dbReference>
<dbReference type="Proteomes" id="UP000001734">
    <property type="component" value="Chromosome"/>
</dbReference>
<dbReference type="GO" id="GO:0005737">
    <property type="term" value="C:cytoplasm"/>
    <property type="evidence" value="ECO:0007669"/>
    <property type="project" value="TreeGrafter"/>
</dbReference>
<dbReference type="GO" id="GO:0000287">
    <property type="term" value="F:magnesium ion binding"/>
    <property type="evidence" value="ECO:0007669"/>
    <property type="project" value="UniProtKB-UniRule"/>
</dbReference>
<dbReference type="GO" id="GO:0004588">
    <property type="term" value="F:orotate phosphoribosyltransferase activity"/>
    <property type="evidence" value="ECO:0007669"/>
    <property type="project" value="UniProtKB-UniRule"/>
</dbReference>
<dbReference type="GO" id="GO:0006207">
    <property type="term" value="P:'de novo' pyrimidine nucleobase biosynthetic process"/>
    <property type="evidence" value="ECO:0007669"/>
    <property type="project" value="TreeGrafter"/>
</dbReference>
<dbReference type="GO" id="GO:0044205">
    <property type="term" value="P:'de novo' UMP biosynthetic process"/>
    <property type="evidence" value="ECO:0007669"/>
    <property type="project" value="UniProtKB-UniRule"/>
</dbReference>
<dbReference type="GO" id="GO:0046132">
    <property type="term" value="P:pyrimidine ribonucleoside biosynthetic process"/>
    <property type="evidence" value="ECO:0007669"/>
    <property type="project" value="TreeGrafter"/>
</dbReference>
<dbReference type="CDD" id="cd06223">
    <property type="entry name" value="PRTases_typeI"/>
    <property type="match status" value="1"/>
</dbReference>
<dbReference type="FunFam" id="3.40.50.2020:FF:000008">
    <property type="entry name" value="Orotate phosphoribosyltransferase"/>
    <property type="match status" value="1"/>
</dbReference>
<dbReference type="Gene3D" id="3.40.50.2020">
    <property type="match status" value="1"/>
</dbReference>
<dbReference type="HAMAP" id="MF_01208">
    <property type="entry name" value="PyrE"/>
    <property type="match status" value="1"/>
</dbReference>
<dbReference type="InterPro" id="IPR023031">
    <property type="entry name" value="OPRT"/>
</dbReference>
<dbReference type="InterPro" id="IPR004467">
    <property type="entry name" value="Or_phspho_trans_dom"/>
</dbReference>
<dbReference type="InterPro" id="IPR000836">
    <property type="entry name" value="PRibTrfase_dom"/>
</dbReference>
<dbReference type="InterPro" id="IPR029057">
    <property type="entry name" value="PRTase-like"/>
</dbReference>
<dbReference type="NCBIfam" id="TIGR00336">
    <property type="entry name" value="pyrE"/>
    <property type="match status" value="1"/>
</dbReference>
<dbReference type="PANTHER" id="PTHR46683">
    <property type="entry name" value="OROTATE PHOSPHORIBOSYLTRANSFERASE 1-RELATED"/>
    <property type="match status" value="1"/>
</dbReference>
<dbReference type="PANTHER" id="PTHR46683:SF1">
    <property type="entry name" value="OROTATE PHOSPHORIBOSYLTRANSFERASE 1-RELATED"/>
    <property type="match status" value="1"/>
</dbReference>
<dbReference type="Pfam" id="PF00156">
    <property type="entry name" value="Pribosyltran"/>
    <property type="match status" value="1"/>
</dbReference>
<dbReference type="SUPFAM" id="SSF53271">
    <property type="entry name" value="PRTase-like"/>
    <property type="match status" value="1"/>
</dbReference>
<dbReference type="PROSITE" id="PS00103">
    <property type="entry name" value="PUR_PYR_PR_TRANSFER"/>
    <property type="match status" value="1"/>
</dbReference>
<organism>
    <name type="scientific">Klebsiella pneumoniae (strain 342)</name>
    <dbReference type="NCBI Taxonomy" id="507522"/>
    <lineage>
        <taxon>Bacteria</taxon>
        <taxon>Pseudomonadati</taxon>
        <taxon>Pseudomonadota</taxon>
        <taxon>Gammaproteobacteria</taxon>
        <taxon>Enterobacterales</taxon>
        <taxon>Enterobacteriaceae</taxon>
        <taxon>Klebsiella/Raoultella group</taxon>
        <taxon>Klebsiella</taxon>
        <taxon>Klebsiella pneumoniae complex</taxon>
    </lineage>
</organism>
<gene>
    <name evidence="1" type="primary">pyrE</name>
    <name type="ordered locus">KPK_0111</name>
</gene>
<accession>B5XTG0</accession>
<comment type="function">
    <text evidence="1">Catalyzes the transfer of a ribosyl phosphate group from 5-phosphoribose 1-diphosphate to orotate, leading to the formation of orotidine monophosphate (OMP).</text>
</comment>
<comment type="catalytic activity">
    <reaction evidence="1">
        <text>orotidine 5'-phosphate + diphosphate = orotate + 5-phospho-alpha-D-ribose 1-diphosphate</text>
        <dbReference type="Rhea" id="RHEA:10380"/>
        <dbReference type="ChEBI" id="CHEBI:30839"/>
        <dbReference type="ChEBI" id="CHEBI:33019"/>
        <dbReference type="ChEBI" id="CHEBI:57538"/>
        <dbReference type="ChEBI" id="CHEBI:58017"/>
        <dbReference type="EC" id="2.4.2.10"/>
    </reaction>
</comment>
<comment type="cofactor">
    <cofactor evidence="1">
        <name>Mg(2+)</name>
        <dbReference type="ChEBI" id="CHEBI:18420"/>
    </cofactor>
</comment>
<comment type="pathway">
    <text evidence="1">Pyrimidine metabolism; UMP biosynthesis via de novo pathway; UMP from orotate: step 1/2.</text>
</comment>
<comment type="subunit">
    <text evidence="1">Homodimer.</text>
</comment>
<comment type="similarity">
    <text evidence="1">Belongs to the purine/pyrimidine phosphoribosyltransferase family. PyrE subfamily.</text>
</comment>
<reference key="1">
    <citation type="journal article" date="2008" name="PLoS Genet.">
        <title>Complete genome sequence of the N2-fixing broad host range endophyte Klebsiella pneumoniae 342 and virulence predictions verified in mice.</title>
        <authorList>
            <person name="Fouts D.E."/>
            <person name="Tyler H.L."/>
            <person name="DeBoy R.T."/>
            <person name="Daugherty S."/>
            <person name="Ren Q."/>
            <person name="Badger J.H."/>
            <person name="Durkin A.S."/>
            <person name="Huot H."/>
            <person name="Shrivastava S."/>
            <person name="Kothari S."/>
            <person name="Dodson R.J."/>
            <person name="Mohamoud Y."/>
            <person name="Khouri H."/>
            <person name="Roesch L.F.W."/>
            <person name="Krogfelt K.A."/>
            <person name="Struve C."/>
            <person name="Triplett E.W."/>
            <person name="Methe B.A."/>
        </authorList>
    </citation>
    <scope>NUCLEOTIDE SEQUENCE [LARGE SCALE GENOMIC DNA]</scope>
    <source>
        <strain>342</strain>
    </source>
</reference>
<sequence length="213" mass="23662">MKPYQRQFIEFALSKQVLKFGEFTLKSGRKSPYFFNAGLFNTGRDLALLGRFYAEALVDSGIEFDLLFGPAYKGIPIATTTAVALAEHHDRDLPYCFNRKEAKTHGEGGNLVGSPLQGRVMLVDDVITAGTAIRESMEIIQAQGAQLAGVLISLDRQERGRGEISAIQEVERDYGCQVISIITLKELIAYLEEKPEMAEYLASVRAYREAYGI</sequence>
<protein>
    <recommendedName>
        <fullName evidence="1">Orotate phosphoribosyltransferase</fullName>
        <shortName evidence="1">OPRT</shortName>
        <shortName evidence="1">OPRTase</shortName>
        <ecNumber evidence="1">2.4.2.10</ecNumber>
    </recommendedName>
</protein>